<reference key="1">
    <citation type="submission" date="1998-11" db="EMBL/GenBank/DDBJ databases">
        <title>Prediction of the coding sequences of unidentified human genes. I. The complete sequence of HAW1053 cDNA clone from human adult aorta cDNA library.</title>
        <authorList>
            <person name="Wei Y.J."/>
            <person name="Ding J.F."/>
            <person name="Xu Y.Y."/>
            <person name="Liu Y.Q."/>
            <person name="Hui R.T."/>
            <person name="Sheng H."/>
            <person name="Zhao X.W."/>
            <person name="Jiang Y.X."/>
            <person name="Meng X.M."/>
            <person name="Liu D.Q."/>
            <person name="Zhao Y."/>
            <person name="Cao H.Q."/>
            <person name="Liu S."/>
        </authorList>
    </citation>
    <scope>NUCLEOTIDE SEQUENCE [MRNA]</scope>
    <source>
        <tissue>Aorta</tissue>
    </source>
</reference>
<reference key="2">
    <citation type="journal article" date="2006" name="Nature">
        <title>The finished DNA sequence of human chromosome 12.</title>
        <authorList>
            <person name="Scherer S.E."/>
            <person name="Muzny D.M."/>
            <person name="Buhay C.J."/>
            <person name="Chen R."/>
            <person name="Cree A."/>
            <person name="Ding Y."/>
            <person name="Dugan-Rocha S."/>
            <person name="Gill R."/>
            <person name="Gunaratne P."/>
            <person name="Harris R.A."/>
            <person name="Hawes A.C."/>
            <person name="Hernandez J."/>
            <person name="Hodgson A.V."/>
            <person name="Hume J."/>
            <person name="Jackson A."/>
            <person name="Khan Z.M."/>
            <person name="Kovar-Smith C."/>
            <person name="Lewis L.R."/>
            <person name="Lozado R.J."/>
            <person name="Metzker M.L."/>
            <person name="Milosavljevic A."/>
            <person name="Miner G.R."/>
            <person name="Montgomery K.T."/>
            <person name="Morgan M.B."/>
            <person name="Nazareth L.V."/>
            <person name="Scott G."/>
            <person name="Sodergren E."/>
            <person name="Song X.-Z."/>
            <person name="Steffen D."/>
            <person name="Lovering R.C."/>
            <person name="Wheeler D.A."/>
            <person name="Worley K.C."/>
            <person name="Yuan Y."/>
            <person name="Zhang Z."/>
            <person name="Adams C.Q."/>
            <person name="Ansari-Lari M.A."/>
            <person name="Ayele M."/>
            <person name="Brown M.J."/>
            <person name="Chen G."/>
            <person name="Chen Z."/>
            <person name="Clerc-Blankenburg K.P."/>
            <person name="Davis C."/>
            <person name="Delgado O."/>
            <person name="Dinh H.H."/>
            <person name="Draper H."/>
            <person name="Gonzalez-Garay M.L."/>
            <person name="Havlak P."/>
            <person name="Jackson L.R."/>
            <person name="Jacob L.S."/>
            <person name="Kelly S.H."/>
            <person name="Li L."/>
            <person name="Li Z."/>
            <person name="Liu J."/>
            <person name="Liu W."/>
            <person name="Lu J."/>
            <person name="Maheshwari M."/>
            <person name="Nguyen B.-V."/>
            <person name="Okwuonu G.O."/>
            <person name="Pasternak S."/>
            <person name="Perez L.M."/>
            <person name="Plopper F.J.H."/>
            <person name="Santibanez J."/>
            <person name="Shen H."/>
            <person name="Tabor P.E."/>
            <person name="Verduzco D."/>
            <person name="Waldron L."/>
            <person name="Wang Q."/>
            <person name="Williams G.A."/>
            <person name="Zhang J."/>
            <person name="Zhou J."/>
            <person name="Allen C.C."/>
            <person name="Amin A.G."/>
            <person name="Anyalebechi V."/>
            <person name="Bailey M."/>
            <person name="Barbaria J.A."/>
            <person name="Bimage K.E."/>
            <person name="Bryant N.P."/>
            <person name="Burch P.E."/>
            <person name="Burkett C.E."/>
            <person name="Burrell K.L."/>
            <person name="Calderon E."/>
            <person name="Cardenas V."/>
            <person name="Carter K."/>
            <person name="Casias K."/>
            <person name="Cavazos I."/>
            <person name="Cavazos S.R."/>
            <person name="Ceasar H."/>
            <person name="Chacko J."/>
            <person name="Chan S.N."/>
            <person name="Chavez D."/>
            <person name="Christopoulos C."/>
            <person name="Chu J."/>
            <person name="Cockrell R."/>
            <person name="Cox C.D."/>
            <person name="Dang M."/>
            <person name="Dathorne S.R."/>
            <person name="David R."/>
            <person name="Davis C.M."/>
            <person name="Davy-Carroll L."/>
            <person name="Deshazo D.R."/>
            <person name="Donlin J.E."/>
            <person name="D'Souza L."/>
            <person name="Eaves K.A."/>
            <person name="Egan A."/>
            <person name="Emery-Cohen A.J."/>
            <person name="Escotto M."/>
            <person name="Flagg N."/>
            <person name="Forbes L.D."/>
            <person name="Gabisi A.M."/>
            <person name="Garza M."/>
            <person name="Hamilton C."/>
            <person name="Henderson N."/>
            <person name="Hernandez O."/>
            <person name="Hines S."/>
            <person name="Hogues M.E."/>
            <person name="Huang M."/>
            <person name="Idlebird D.G."/>
            <person name="Johnson R."/>
            <person name="Jolivet A."/>
            <person name="Jones S."/>
            <person name="Kagan R."/>
            <person name="King L.M."/>
            <person name="Leal B."/>
            <person name="Lebow H."/>
            <person name="Lee S."/>
            <person name="LeVan J.M."/>
            <person name="Lewis L.C."/>
            <person name="London P."/>
            <person name="Lorensuhewa L.M."/>
            <person name="Loulseged H."/>
            <person name="Lovett D.A."/>
            <person name="Lucier A."/>
            <person name="Lucier R.L."/>
            <person name="Ma J."/>
            <person name="Madu R.C."/>
            <person name="Mapua P."/>
            <person name="Martindale A.D."/>
            <person name="Martinez E."/>
            <person name="Massey E."/>
            <person name="Mawhiney S."/>
            <person name="Meador M.G."/>
            <person name="Mendez S."/>
            <person name="Mercado C."/>
            <person name="Mercado I.C."/>
            <person name="Merritt C.E."/>
            <person name="Miner Z.L."/>
            <person name="Minja E."/>
            <person name="Mitchell T."/>
            <person name="Mohabbat F."/>
            <person name="Mohabbat K."/>
            <person name="Montgomery B."/>
            <person name="Moore N."/>
            <person name="Morris S."/>
            <person name="Munidasa M."/>
            <person name="Ngo R.N."/>
            <person name="Nguyen N.B."/>
            <person name="Nickerson E."/>
            <person name="Nwaokelemeh O.O."/>
            <person name="Nwokenkwo S."/>
            <person name="Obregon M."/>
            <person name="Oguh M."/>
            <person name="Oragunye N."/>
            <person name="Oviedo R.J."/>
            <person name="Parish B.J."/>
            <person name="Parker D.N."/>
            <person name="Parrish J."/>
            <person name="Parks K.L."/>
            <person name="Paul H.A."/>
            <person name="Payton B.A."/>
            <person name="Perez A."/>
            <person name="Perrin W."/>
            <person name="Pickens A."/>
            <person name="Primus E.L."/>
            <person name="Pu L.-L."/>
            <person name="Puazo M."/>
            <person name="Quiles M.M."/>
            <person name="Quiroz J.B."/>
            <person name="Rabata D."/>
            <person name="Reeves K."/>
            <person name="Ruiz S.J."/>
            <person name="Shao H."/>
            <person name="Sisson I."/>
            <person name="Sonaike T."/>
            <person name="Sorelle R.P."/>
            <person name="Sutton A.E."/>
            <person name="Svatek A.F."/>
            <person name="Svetz L.A."/>
            <person name="Tamerisa K.S."/>
            <person name="Taylor T.R."/>
            <person name="Teague B."/>
            <person name="Thomas N."/>
            <person name="Thorn R.D."/>
            <person name="Trejos Z.Y."/>
            <person name="Trevino B.K."/>
            <person name="Ukegbu O.N."/>
            <person name="Urban J.B."/>
            <person name="Vasquez L.I."/>
            <person name="Vera V.A."/>
            <person name="Villasana D.M."/>
            <person name="Wang L."/>
            <person name="Ward-Moore S."/>
            <person name="Warren J.T."/>
            <person name="Wei X."/>
            <person name="White F."/>
            <person name="Williamson A.L."/>
            <person name="Wleczyk R."/>
            <person name="Wooden H.S."/>
            <person name="Wooden S.H."/>
            <person name="Yen J."/>
            <person name="Yoon L."/>
            <person name="Yoon V."/>
            <person name="Zorrilla S.E."/>
            <person name="Nelson D."/>
            <person name="Kucherlapati R."/>
            <person name="Weinstock G."/>
            <person name="Gibbs R.A."/>
        </authorList>
    </citation>
    <scope>NUCLEOTIDE SEQUENCE [LARGE SCALE GENOMIC DNA]</scope>
</reference>
<reference key="3">
    <citation type="journal article" date="2004" name="Genome Res.">
        <title>The status, quality, and expansion of the NIH full-length cDNA project: the Mammalian Gene Collection (MGC).</title>
        <authorList>
            <consortium name="The MGC Project Team"/>
        </authorList>
    </citation>
    <scope>NUCLEOTIDE SEQUENCE [LARGE SCALE MRNA]</scope>
    <source>
        <tissue>Lung</tissue>
    </source>
</reference>
<gene>
    <name type="primary">PLEKHA8P1</name>
    <name type="synonym">PLEKHA9</name>
    <name type="ORF">HAW1053</name>
</gene>
<feature type="chain" id="PRO_0000306868" description="Putative protein PLEKHA9">
    <location>
        <begin position="1"/>
        <end position="391"/>
    </location>
</feature>
<protein>
    <recommendedName>
        <fullName>Putative protein PLEKHA9</fullName>
    </recommendedName>
    <alternativeName>
        <fullName>Pleckstrin homology domain-containing family A member 8 pseudogene 1</fullName>
    </alternativeName>
</protein>
<accession>O95397</accession>
<name>PKHA9_HUMAN</name>
<proteinExistence type="uncertain"/>
<sequence>MSELRLCCDLLVQQVDKTKEVTTTGVSNSEEGIDVGTLLKSTCNTFLKTLEECMQIANAAFTSELLYHTPPGSPQLAMLKSSKMKHPIIPIHNSLERQTELSTCENGSLNMEINGEEEILMKNKNSLYLKSAEIDCSISSEENTDDNITVQGEIMKEDRMENLKNHDNNLSQSGSDSSCSPECLWEEGKEVIPTFFSTMNTSFSDIELLEDSGIPTEAFLASCCAVVPVLDKLGPTVFAPVKMDLVENIKKVNQKYITNKEEFTTLQKIVLHEVEADVAQVRNSATEALLWLKRGLKFLKGFLTEVKNGEKDIQTALNNAYGKTLRQHHGWVVRGVFALALRATPSYEDFVAALTVKEGDHRKEAFSIGMQRDLSLYLPAMKKQMAILDAL</sequence>
<evidence type="ECO:0000305" key="1"/>
<comment type="interaction">
    <interactant intactId="EBI-21815030">
        <id>O95397</id>
    </interactant>
    <interactant intactId="EBI-11032488">
        <id>Q96JA3</id>
        <label>PLEKHA8</label>
    </interactant>
    <organismsDiffer>false</organismsDiffer>
    <experiments>2</experiments>
</comment>
<comment type="caution">
    <text evidence="1">Could be the product of a pseudogene.</text>
</comment>
<dbReference type="EMBL" id="AF103731">
    <property type="protein sequence ID" value="AAC97956.1"/>
    <property type="molecule type" value="mRNA"/>
</dbReference>
<dbReference type="EMBL" id="AC009248">
    <property type="status" value="NOT_ANNOTATED_CDS"/>
    <property type="molecule type" value="Genomic_DNA"/>
</dbReference>
<dbReference type="EMBL" id="BC063575">
    <property type="protein sequence ID" value="AAH63575.1"/>
    <property type="molecule type" value="mRNA"/>
</dbReference>
<dbReference type="SMR" id="O95397"/>
<dbReference type="FunCoup" id="O95397">
    <property type="interactions" value="188"/>
</dbReference>
<dbReference type="IntAct" id="O95397">
    <property type="interactions" value="1"/>
</dbReference>
<dbReference type="iPTMnet" id="O95397"/>
<dbReference type="PhosphoSitePlus" id="O95397"/>
<dbReference type="BioMuta" id="HGNC:30222"/>
<dbReference type="jPOST" id="O95397"/>
<dbReference type="MassIVE" id="O95397"/>
<dbReference type="PeptideAtlas" id="O95397"/>
<dbReference type="ProteomicsDB" id="50848"/>
<dbReference type="Pumba" id="O95397"/>
<dbReference type="AGR" id="HGNC:30222"/>
<dbReference type="GeneCards" id="PLEKHA8P1"/>
<dbReference type="HGNC" id="HGNC:30222">
    <property type="gene designation" value="PLEKHA8P1"/>
</dbReference>
<dbReference type="neXtProt" id="NX_O95397"/>
<dbReference type="PharmGKB" id="PA134868961"/>
<dbReference type="InParanoid" id="O95397"/>
<dbReference type="PAN-GO" id="O95397">
    <property type="GO annotations" value="5 GO annotations based on evolutionary models"/>
</dbReference>
<dbReference type="PhylomeDB" id="O95397"/>
<dbReference type="PathwayCommons" id="O95397"/>
<dbReference type="ChiTaRS" id="PLEKHA8P1">
    <property type="organism name" value="human"/>
</dbReference>
<dbReference type="Pharos" id="O95397">
    <property type="development level" value="Tdark"/>
</dbReference>
<dbReference type="PRO" id="PR:O95397"/>
<dbReference type="Proteomes" id="UP000005640">
    <property type="component" value="Unplaced"/>
</dbReference>
<dbReference type="RNAct" id="O95397">
    <property type="molecule type" value="protein"/>
</dbReference>
<dbReference type="GO" id="GO:0005829">
    <property type="term" value="C:cytosol"/>
    <property type="evidence" value="ECO:0000318"/>
    <property type="project" value="GO_Central"/>
</dbReference>
<dbReference type="GO" id="GO:1902387">
    <property type="term" value="F:ceramide 1-phosphate binding"/>
    <property type="evidence" value="ECO:0000318"/>
    <property type="project" value="GO_Central"/>
</dbReference>
<dbReference type="GO" id="GO:1902388">
    <property type="term" value="F:ceramide 1-phosphate transfer activity"/>
    <property type="evidence" value="ECO:0000318"/>
    <property type="project" value="GO_Central"/>
</dbReference>
<dbReference type="GO" id="GO:0035627">
    <property type="term" value="P:ceramide transport"/>
    <property type="evidence" value="ECO:0000318"/>
    <property type="project" value="GO_Central"/>
</dbReference>
<dbReference type="GO" id="GO:0120009">
    <property type="term" value="P:intermembrane lipid transfer"/>
    <property type="evidence" value="ECO:0000318"/>
    <property type="project" value="GO_Central"/>
</dbReference>
<dbReference type="FunFam" id="1.10.3520.10:FF:000001">
    <property type="entry name" value="Pleckstrin domain-containing family A member 8"/>
    <property type="match status" value="1"/>
</dbReference>
<dbReference type="Gene3D" id="1.10.3520.10">
    <property type="entry name" value="Glycolipid transfer protein"/>
    <property type="match status" value="1"/>
</dbReference>
<dbReference type="InterPro" id="IPR036497">
    <property type="entry name" value="GLTP_sf"/>
</dbReference>
<dbReference type="InterPro" id="IPR014830">
    <property type="entry name" value="Glycolipid_transfer_prot_dom"/>
</dbReference>
<dbReference type="PANTHER" id="PTHR10219">
    <property type="entry name" value="GLYCOLIPID TRANSFER PROTEIN-RELATED"/>
    <property type="match status" value="1"/>
</dbReference>
<dbReference type="PANTHER" id="PTHR10219:SF75">
    <property type="entry name" value="PROTEIN PLEKHA9-RELATED"/>
    <property type="match status" value="1"/>
</dbReference>
<dbReference type="Pfam" id="PF08718">
    <property type="entry name" value="GLTP"/>
    <property type="match status" value="1"/>
</dbReference>
<dbReference type="SUPFAM" id="SSF110004">
    <property type="entry name" value="Glycolipid transfer protein, GLTP"/>
    <property type="match status" value="1"/>
</dbReference>
<keyword id="KW-1185">Reference proteome</keyword>
<organism>
    <name type="scientific">Homo sapiens</name>
    <name type="common">Human</name>
    <dbReference type="NCBI Taxonomy" id="9606"/>
    <lineage>
        <taxon>Eukaryota</taxon>
        <taxon>Metazoa</taxon>
        <taxon>Chordata</taxon>
        <taxon>Craniata</taxon>
        <taxon>Vertebrata</taxon>
        <taxon>Euteleostomi</taxon>
        <taxon>Mammalia</taxon>
        <taxon>Eutheria</taxon>
        <taxon>Euarchontoglires</taxon>
        <taxon>Primates</taxon>
        <taxon>Haplorrhini</taxon>
        <taxon>Catarrhini</taxon>
        <taxon>Hominidae</taxon>
        <taxon>Homo</taxon>
    </lineage>
</organism>